<name>SEAS1_HUMAN</name>
<dbReference type="EMBL" id="AL035414">
    <property type="status" value="NOT_ANNOTATED_CDS"/>
    <property type="molecule type" value="Genomic_DNA"/>
</dbReference>
<dbReference type="EMBL" id="BC066352">
    <property type="status" value="NOT_ANNOTATED_CDS"/>
    <property type="molecule type" value="mRNA"/>
</dbReference>
<dbReference type="EMBL" id="BC094794">
    <property type="status" value="NOT_ANNOTATED_CDS"/>
    <property type="molecule type" value="mRNA"/>
</dbReference>
<dbReference type="iPTMnet" id="Q5TG53"/>
<dbReference type="PhosphoSitePlus" id="Q5TG53"/>
<dbReference type="BioMuta" id="HGNC:32019"/>
<dbReference type="PeptideAtlas" id="Q5TG53"/>
<dbReference type="AGR" id="HGNC:32019"/>
<dbReference type="GeneCards" id="SERTAD4-AS1"/>
<dbReference type="HGNC" id="HGNC:32019">
    <property type="gene designation" value="SERTAD4-AS1"/>
</dbReference>
<dbReference type="neXtProt" id="NX_Q5TG53"/>
<dbReference type="InParanoid" id="Q5TG53"/>
<dbReference type="PAN-GO" id="Q5TG53">
    <property type="GO annotations" value="0 GO annotations based on evolutionary models"/>
</dbReference>
<dbReference type="TreeFam" id="TF353672"/>
<dbReference type="ChiTaRS" id="SERTAD4-AS1">
    <property type="organism name" value="human"/>
</dbReference>
<dbReference type="Pharos" id="Q5TG53">
    <property type="development level" value="Tdark"/>
</dbReference>
<dbReference type="Proteomes" id="UP000005640">
    <property type="component" value="Unplaced"/>
</dbReference>
<dbReference type="RNAct" id="Q5TG53">
    <property type="molecule type" value="protein"/>
</dbReference>
<accession>Q5TG53</accession>
<feature type="chain" id="PRO_0000346443" description="Putative uncharacterized protein SERTAD4-AS1">
    <location>
        <begin position="1"/>
        <end position="156"/>
    </location>
</feature>
<feature type="region of interest" description="Disordered" evidence="1">
    <location>
        <begin position="1"/>
        <end position="89"/>
    </location>
</feature>
<feature type="region of interest" description="Disordered" evidence="1">
    <location>
        <begin position="129"/>
        <end position="156"/>
    </location>
</feature>
<feature type="compositionally biased region" description="Pro residues" evidence="1">
    <location>
        <begin position="1"/>
        <end position="12"/>
    </location>
</feature>
<feature type="compositionally biased region" description="Basic and acidic residues" evidence="1">
    <location>
        <begin position="49"/>
        <end position="67"/>
    </location>
</feature>
<feature type="splice variant" id="VSP_035119" description="In isoform 2." evidence="2">
    <original>GELRTEEPPPPAARLCCLGGGCGGGGGGGQKVSATASIPFSCKRALLTSTIPLSPPAKRRGIRTWGHPSYLTPSPTMRD</original>
    <variation>VILRL</variation>
    <location>
        <begin position="78"/>
        <end position="156"/>
    </location>
</feature>
<feature type="sequence variant" id="VAR_046125" description="In dbSNP:rs624270.">
    <original>R</original>
    <variation>Q</variation>
    <location>
        <position position="91"/>
    </location>
</feature>
<proteinExistence type="uncertain"/>
<organism>
    <name type="scientific">Homo sapiens</name>
    <name type="common">Human</name>
    <dbReference type="NCBI Taxonomy" id="9606"/>
    <lineage>
        <taxon>Eukaryota</taxon>
        <taxon>Metazoa</taxon>
        <taxon>Chordata</taxon>
        <taxon>Craniata</taxon>
        <taxon>Vertebrata</taxon>
        <taxon>Euteleostomi</taxon>
        <taxon>Mammalia</taxon>
        <taxon>Eutheria</taxon>
        <taxon>Euarchontoglires</taxon>
        <taxon>Primates</taxon>
        <taxon>Haplorrhini</taxon>
        <taxon>Catarrhini</taxon>
        <taxon>Hominidae</taxon>
        <taxon>Homo</taxon>
    </lineage>
</organism>
<reference key="1">
    <citation type="journal article" date="2006" name="Nature">
        <title>The DNA sequence and biological annotation of human chromosome 1.</title>
        <authorList>
            <person name="Gregory S.G."/>
            <person name="Barlow K.F."/>
            <person name="McLay K.E."/>
            <person name="Kaul R."/>
            <person name="Swarbreck D."/>
            <person name="Dunham A."/>
            <person name="Scott C.E."/>
            <person name="Howe K.L."/>
            <person name="Woodfine K."/>
            <person name="Spencer C.C.A."/>
            <person name="Jones M.C."/>
            <person name="Gillson C."/>
            <person name="Searle S."/>
            <person name="Zhou Y."/>
            <person name="Kokocinski F."/>
            <person name="McDonald L."/>
            <person name="Evans R."/>
            <person name="Phillips K."/>
            <person name="Atkinson A."/>
            <person name="Cooper R."/>
            <person name="Jones C."/>
            <person name="Hall R.E."/>
            <person name="Andrews T.D."/>
            <person name="Lloyd C."/>
            <person name="Ainscough R."/>
            <person name="Almeida J.P."/>
            <person name="Ambrose K.D."/>
            <person name="Anderson F."/>
            <person name="Andrew R.W."/>
            <person name="Ashwell R.I.S."/>
            <person name="Aubin K."/>
            <person name="Babbage A.K."/>
            <person name="Bagguley C.L."/>
            <person name="Bailey J."/>
            <person name="Beasley H."/>
            <person name="Bethel G."/>
            <person name="Bird C.P."/>
            <person name="Bray-Allen S."/>
            <person name="Brown J.Y."/>
            <person name="Brown A.J."/>
            <person name="Buckley D."/>
            <person name="Burton J."/>
            <person name="Bye J."/>
            <person name="Carder C."/>
            <person name="Chapman J.C."/>
            <person name="Clark S.Y."/>
            <person name="Clarke G."/>
            <person name="Clee C."/>
            <person name="Cobley V."/>
            <person name="Collier R.E."/>
            <person name="Corby N."/>
            <person name="Coville G.J."/>
            <person name="Davies J."/>
            <person name="Deadman R."/>
            <person name="Dunn M."/>
            <person name="Earthrowl M."/>
            <person name="Ellington A.G."/>
            <person name="Errington H."/>
            <person name="Frankish A."/>
            <person name="Frankland J."/>
            <person name="French L."/>
            <person name="Garner P."/>
            <person name="Garnett J."/>
            <person name="Gay L."/>
            <person name="Ghori M.R.J."/>
            <person name="Gibson R."/>
            <person name="Gilby L.M."/>
            <person name="Gillett W."/>
            <person name="Glithero R.J."/>
            <person name="Grafham D.V."/>
            <person name="Griffiths C."/>
            <person name="Griffiths-Jones S."/>
            <person name="Grocock R."/>
            <person name="Hammond S."/>
            <person name="Harrison E.S.I."/>
            <person name="Hart E."/>
            <person name="Haugen E."/>
            <person name="Heath P.D."/>
            <person name="Holmes S."/>
            <person name="Holt K."/>
            <person name="Howden P.J."/>
            <person name="Hunt A.R."/>
            <person name="Hunt S.E."/>
            <person name="Hunter G."/>
            <person name="Isherwood J."/>
            <person name="James R."/>
            <person name="Johnson C."/>
            <person name="Johnson D."/>
            <person name="Joy A."/>
            <person name="Kay M."/>
            <person name="Kershaw J.K."/>
            <person name="Kibukawa M."/>
            <person name="Kimberley A.M."/>
            <person name="King A."/>
            <person name="Knights A.J."/>
            <person name="Lad H."/>
            <person name="Laird G."/>
            <person name="Lawlor S."/>
            <person name="Leongamornlert D.A."/>
            <person name="Lloyd D.M."/>
            <person name="Loveland J."/>
            <person name="Lovell J."/>
            <person name="Lush M.J."/>
            <person name="Lyne R."/>
            <person name="Martin S."/>
            <person name="Mashreghi-Mohammadi M."/>
            <person name="Matthews L."/>
            <person name="Matthews N.S.W."/>
            <person name="McLaren S."/>
            <person name="Milne S."/>
            <person name="Mistry S."/>
            <person name="Moore M.J.F."/>
            <person name="Nickerson T."/>
            <person name="O'Dell C.N."/>
            <person name="Oliver K."/>
            <person name="Palmeiri A."/>
            <person name="Palmer S.A."/>
            <person name="Parker A."/>
            <person name="Patel D."/>
            <person name="Pearce A.V."/>
            <person name="Peck A.I."/>
            <person name="Pelan S."/>
            <person name="Phelps K."/>
            <person name="Phillimore B.J."/>
            <person name="Plumb R."/>
            <person name="Rajan J."/>
            <person name="Raymond C."/>
            <person name="Rouse G."/>
            <person name="Saenphimmachak C."/>
            <person name="Sehra H.K."/>
            <person name="Sheridan E."/>
            <person name="Shownkeen R."/>
            <person name="Sims S."/>
            <person name="Skuce C.D."/>
            <person name="Smith M."/>
            <person name="Steward C."/>
            <person name="Subramanian S."/>
            <person name="Sycamore N."/>
            <person name="Tracey A."/>
            <person name="Tromans A."/>
            <person name="Van Helmond Z."/>
            <person name="Wall M."/>
            <person name="Wallis J.M."/>
            <person name="White S."/>
            <person name="Whitehead S.L."/>
            <person name="Wilkinson J.E."/>
            <person name="Willey D.L."/>
            <person name="Williams H."/>
            <person name="Wilming L."/>
            <person name="Wray P.W."/>
            <person name="Wu Z."/>
            <person name="Coulson A."/>
            <person name="Vaudin M."/>
            <person name="Sulston J.E."/>
            <person name="Durbin R.M."/>
            <person name="Hubbard T."/>
            <person name="Wooster R."/>
            <person name="Dunham I."/>
            <person name="Carter N.P."/>
            <person name="McVean G."/>
            <person name="Ross M.T."/>
            <person name="Harrow J."/>
            <person name="Olson M.V."/>
            <person name="Beck S."/>
            <person name="Rogers J."/>
            <person name="Bentley D.R."/>
        </authorList>
    </citation>
    <scope>NUCLEOTIDE SEQUENCE [LARGE SCALE GENOMIC DNA]</scope>
</reference>
<reference key="2">
    <citation type="journal article" date="2004" name="Genome Res.">
        <title>The status, quality, and expansion of the NIH full-length cDNA project: the Mammalian Gene Collection (MGC).</title>
        <authorList>
            <consortium name="The MGC Project Team"/>
        </authorList>
    </citation>
    <scope>NUCLEOTIDE SEQUENCE [LARGE SCALE MRNA] (ISOFORMS 1 AND 2)</scope>
    <source>
        <tissue>Hypothalamus</tissue>
        <tissue>Placenta</tissue>
    </source>
</reference>
<sequence length="156" mass="16212">MSARPSLPPLPAKPAGSPRLRERPAPVGPGGEDAYSLLLRPQLGTRKVARAEEAGGEEGKREAEAWTRRAAASARRGGELRTEEPPPPAARLCCLGGGCGGGGGGGQKVSATASIPFSCKRALLTSTIPLSPPAKRRGIRTWGHPSYLTPSPTMRD</sequence>
<keyword id="KW-0025">Alternative splicing</keyword>
<keyword id="KW-1185">Reference proteome</keyword>
<protein>
    <recommendedName>
        <fullName>Putative uncharacterized protein SERTAD4-AS1</fullName>
    </recommendedName>
    <alternativeName>
        <fullName>SERTAD4 antisense RNA 1</fullName>
    </alternativeName>
    <alternativeName>
        <fullName>SERTAD4 antisense gene protein 1</fullName>
    </alternativeName>
</protein>
<comment type="alternative products">
    <event type="alternative splicing"/>
    <isoform>
        <id>Q5TG53-1</id>
        <name>1</name>
        <sequence type="displayed"/>
    </isoform>
    <isoform>
        <id>Q5TG53-2</id>
        <name>2</name>
        <sequence type="described" ref="VSP_035119"/>
    </isoform>
</comment>
<comment type="caution">
    <text evidence="3">Product of a dubious CDS prediction.</text>
</comment>
<evidence type="ECO:0000256" key="1">
    <source>
        <dbReference type="SAM" id="MobiDB-lite"/>
    </source>
</evidence>
<evidence type="ECO:0000303" key="2">
    <source>
    </source>
</evidence>
<evidence type="ECO:0000305" key="3"/>
<gene>
    <name type="primary">SERTAD4-AS1</name>
    <name type="synonym">C1orf133</name>
</gene>